<accession>Q3T061</accession>
<proteinExistence type="inferred from homology"/>
<name>CO72L_BOVIN</name>
<feature type="transit peptide" description="Mitochondrion" evidence="3">
    <location>
        <begin position="1"/>
        <end position="55"/>
    </location>
</feature>
<feature type="chain" id="PRO_0000247326" description="Cytochrome c oxidase subunit 7A2-like, mitochondrial">
    <location>
        <begin position="56"/>
        <end position="114"/>
    </location>
</feature>
<feature type="transmembrane region" description="Helical" evidence="2">
    <location>
        <begin position="82"/>
        <end position="107"/>
    </location>
</feature>
<feature type="modified residue" description="N6-acetyllysine" evidence="1">
    <location>
        <position position="69"/>
    </location>
</feature>
<reference key="1">
    <citation type="submission" date="2005-08" db="EMBL/GenBank/DDBJ databases">
        <authorList>
            <consortium name="NIH - Mammalian Gene Collection (MGC) project"/>
        </authorList>
    </citation>
    <scope>NUCLEOTIDE SEQUENCE [LARGE SCALE MRNA]</scope>
    <source>
        <strain>Crossbred X Angus</strain>
        <tissue>Liver</tissue>
    </source>
</reference>
<comment type="function">
    <text evidence="1 2">Assembly factor that mediates the formation of some mitochondrial respiratory supercomplexes (respirasomes), thereby promoting oxidative phosphorylation and energy metabolism. Acts as a molecular adapter that associates with both mitochondrial respiratory complexes III (CIII) and IV (CIV), promoting their association. Mediates the formation of various mitochondrial respiratory supercomplexes, such as MCIII(2)IV(2), composed of two CIII and two CIV, and the CS-respirasome (MCI(1)III(2)IV(2)), composed of one CI, two CIII and two CIV (By similarity). Not involved in the formation of the canonical respirasome (MCI(1)III(2)IV(1)), composed of one CI, two CIII and one CIV (By similarity). The formation of different respirasomes is important for cell adaptation to oxygen conditions and prevent metabolic exhaustion: supercomplexes mediated by COX7A2L/SCAF1 are required to maintain oxidative phosphorylation upon low oxygen conditions and promote metabolic rewiring toward glycolysis (By similarity).</text>
</comment>
<comment type="subunit">
    <text evidence="1">Interacts with the mitochondrial respiratory complexes III (CIII) and IV (CIV), promoting their association.</text>
</comment>
<comment type="subcellular location">
    <subcellularLocation>
        <location evidence="1">Mitochondrion inner membrane</location>
        <topology evidence="2">Single-pass membrane protein</topology>
    </subcellularLocation>
</comment>
<comment type="similarity">
    <text evidence="4">Belongs to the cytochrome c oxidase VIIa family.</text>
</comment>
<organism>
    <name type="scientific">Bos taurus</name>
    <name type="common">Bovine</name>
    <dbReference type="NCBI Taxonomy" id="9913"/>
    <lineage>
        <taxon>Eukaryota</taxon>
        <taxon>Metazoa</taxon>
        <taxon>Chordata</taxon>
        <taxon>Craniata</taxon>
        <taxon>Vertebrata</taxon>
        <taxon>Euteleostomi</taxon>
        <taxon>Mammalia</taxon>
        <taxon>Eutheria</taxon>
        <taxon>Laurasiatheria</taxon>
        <taxon>Artiodactyla</taxon>
        <taxon>Ruminantia</taxon>
        <taxon>Pecora</taxon>
        <taxon>Bovidae</taxon>
        <taxon>Bovinae</taxon>
        <taxon>Bos</taxon>
    </lineage>
</organism>
<evidence type="ECO:0000250" key="1">
    <source>
        <dbReference type="UniProtKB" id="O14548"/>
    </source>
</evidence>
<evidence type="ECO:0000250" key="2">
    <source>
        <dbReference type="UniProtKB" id="Q99KD6"/>
    </source>
</evidence>
<evidence type="ECO:0000255" key="3"/>
<evidence type="ECO:0000305" key="4"/>
<dbReference type="EMBL" id="BC102552">
    <property type="protein sequence ID" value="AAI02553.1"/>
    <property type="molecule type" value="mRNA"/>
</dbReference>
<dbReference type="RefSeq" id="NP_001029867.1">
    <property type="nucleotide sequence ID" value="NM_001034695.2"/>
</dbReference>
<dbReference type="SMR" id="Q3T061"/>
<dbReference type="FunCoup" id="Q3T061">
    <property type="interactions" value="1992"/>
</dbReference>
<dbReference type="STRING" id="9913.ENSBTAP00000000943"/>
<dbReference type="PaxDb" id="9913-ENSBTAP00000000943"/>
<dbReference type="PeptideAtlas" id="Q3T061"/>
<dbReference type="Ensembl" id="ENSBTAT00000100092.1">
    <property type="protein sequence ID" value="ENSBTAP00000087665.1"/>
    <property type="gene ID" value="ENSBTAG00000000705.4"/>
</dbReference>
<dbReference type="GeneID" id="540225"/>
<dbReference type="KEGG" id="bta:540225"/>
<dbReference type="CTD" id="9167"/>
<dbReference type="VEuPathDB" id="HostDB:ENSBTAG00000000705"/>
<dbReference type="VGNC" id="VGNC:27640">
    <property type="gene designation" value="COX7A2L"/>
</dbReference>
<dbReference type="eggNOG" id="ENOG502S14M">
    <property type="taxonomic scope" value="Eukaryota"/>
</dbReference>
<dbReference type="GeneTree" id="ENSGT00940000154815"/>
<dbReference type="HOGENOM" id="CLU_149431_0_0_1"/>
<dbReference type="InParanoid" id="Q3T061"/>
<dbReference type="OMA" id="KFNGITQ"/>
<dbReference type="OrthoDB" id="5966508at2759"/>
<dbReference type="TreeFam" id="TF105067"/>
<dbReference type="Reactome" id="R-BTA-5628897">
    <property type="pathway name" value="TP53 Regulates Metabolic Genes"/>
</dbReference>
<dbReference type="Reactome" id="R-BTA-611105">
    <property type="pathway name" value="Respiratory electron transport"/>
</dbReference>
<dbReference type="Reactome" id="R-BTA-9707564">
    <property type="pathway name" value="Cytoprotection by HMOX1"/>
</dbReference>
<dbReference type="Reactome" id="R-BTA-9864848">
    <property type="pathway name" value="Complex IV assembly"/>
</dbReference>
<dbReference type="Proteomes" id="UP000009136">
    <property type="component" value="Chromosome 11"/>
</dbReference>
<dbReference type="Bgee" id="ENSBTAG00000000705">
    <property type="expression patterns" value="Expressed in oocyte and 107 other cell types or tissues"/>
</dbReference>
<dbReference type="GO" id="GO:0005743">
    <property type="term" value="C:mitochondrial inner membrane"/>
    <property type="evidence" value="ECO:0007669"/>
    <property type="project" value="UniProtKB-SubCell"/>
</dbReference>
<dbReference type="GO" id="GO:0005739">
    <property type="term" value="C:mitochondrion"/>
    <property type="evidence" value="ECO:0000250"/>
    <property type="project" value="UniProtKB"/>
</dbReference>
<dbReference type="GO" id="GO:0098803">
    <property type="term" value="C:respiratory chain complex"/>
    <property type="evidence" value="ECO:0000318"/>
    <property type="project" value="GO_Central"/>
</dbReference>
<dbReference type="GO" id="GO:0045277">
    <property type="term" value="C:respiratory chain complex IV"/>
    <property type="evidence" value="ECO:0007669"/>
    <property type="project" value="InterPro"/>
</dbReference>
<dbReference type="GO" id="GO:0030674">
    <property type="term" value="F:protein-macromolecule adaptor activity"/>
    <property type="evidence" value="ECO:0000250"/>
    <property type="project" value="UniProtKB"/>
</dbReference>
<dbReference type="GO" id="GO:0006123">
    <property type="term" value="P:mitochondrial electron transport, cytochrome c to oxygen"/>
    <property type="evidence" value="ECO:0007669"/>
    <property type="project" value="InterPro"/>
</dbReference>
<dbReference type="GO" id="GO:0097250">
    <property type="term" value="P:mitochondrial respirasome assembly"/>
    <property type="evidence" value="ECO:0000250"/>
    <property type="project" value="UniProtKB"/>
</dbReference>
<dbReference type="GO" id="GO:0002082">
    <property type="term" value="P:regulation of oxidative phosphorylation"/>
    <property type="evidence" value="ECO:0000250"/>
    <property type="project" value="UniProtKB"/>
</dbReference>
<dbReference type="CDD" id="cd00928">
    <property type="entry name" value="Cyt_c_Oxidase_VIIa"/>
    <property type="match status" value="1"/>
</dbReference>
<dbReference type="FunFam" id="4.10.91.10:FF:000001">
    <property type="entry name" value="Cytochrome c oxidase subunit 7A1, mitochondrial"/>
    <property type="match status" value="1"/>
</dbReference>
<dbReference type="Gene3D" id="4.10.91.10">
    <property type="entry name" value="Cytochrome c oxidase, subunit VIIa"/>
    <property type="match status" value="1"/>
</dbReference>
<dbReference type="InterPro" id="IPR039297">
    <property type="entry name" value="COX7a"/>
</dbReference>
<dbReference type="InterPro" id="IPR017267">
    <property type="entry name" value="Cyt_c_oxidase_su7a-rel_mt"/>
</dbReference>
<dbReference type="InterPro" id="IPR036539">
    <property type="entry name" value="Cyt_c_oxidase_su7a_sf"/>
</dbReference>
<dbReference type="InterPro" id="IPR003177">
    <property type="entry name" value="Cytc_oxidase_su7a_met"/>
</dbReference>
<dbReference type="PANTHER" id="PTHR10510">
    <property type="entry name" value="CYTOCHROME C OXIDASE POLYPEPTIDE 7A"/>
    <property type="match status" value="1"/>
</dbReference>
<dbReference type="PANTHER" id="PTHR10510:SF2">
    <property type="entry name" value="CYTOCHROME C OXIDASE SUBUNIT 7A-RELATED PROTEIN, MITOCHONDRIAL"/>
    <property type="match status" value="1"/>
</dbReference>
<dbReference type="Pfam" id="PF02238">
    <property type="entry name" value="COX7a"/>
    <property type="match status" value="1"/>
</dbReference>
<dbReference type="PIRSF" id="PIRSF037710">
    <property type="entry name" value="COX7A-rel_mt"/>
    <property type="match status" value="1"/>
</dbReference>
<dbReference type="SUPFAM" id="SSF81419">
    <property type="entry name" value="Mitochondrial cytochrome c oxidase subunit VIIa"/>
    <property type="match status" value="1"/>
</dbReference>
<gene>
    <name evidence="1" type="primary">COX7A2L</name>
    <name evidence="1" type="synonym">SCAF1</name>
</gene>
<sequence length="114" mass="12544">MYYKFSGFTQKLAGAWASDAYSPQGLRPVVSTEAPPIIFATPTKLSSGPTAYDYAGKNTVPELQKFFQKSDGVPIHLKRGLPDQMLYRTTMALTVGGTIYCLIALYMASQPRNK</sequence>
<keyword id="KW-0007">Acetylation</keyword>
<keyword id="KW-0472">Membrane</keyword>
<keyword id="KW-0496">Mitochondrion</keyword>
<keyword id="KW-0999">Mitochondrion inner membrane</keyword>
<keyword id="KW-1185">Reference proteome</keyword>
<keyword id="KW-0809">Transit peptide</keyword>
<keyword id="KW-0812">Transmembrane</keyword>
<keyword id="KW-1133">Transmembrane helix</keyword>
<protein>
    <recommendedName>
        <fullName evidence="4">Cytochrome c oxidase subunit 7A2-like, mitochondrial</fullName>
    </recommendedName>
    <alternativeName>
        <fullName evidence="1">Supercomplex assembly factor 1</fullName>
    </alternativeName>
</protein>